<gene>
    <name evidence="1" type="primary">truA</name>
    <name type="ordered locus">SPCG_1578</name>
</gene>
<accession>B2IRB1</accession>
<sequence>MTRYKATISYDGYAFAGFQRQSHARSVQEEIEKTLTRLNKGQTITVHGAGRTDSGVHALGQVIHFDLPYQMDEEKLRFALDTQSPEDIDVISIELVADDFHCRYAKHSKTYEFIVDRGRPKNPMRRHYATHFPYPLDVERMQIAIKKLEGTHDFTGFTASGTSVEDKVRTITEASLIVDETGQFLTFTFSGNGFLYKQIRNMVGTLLKIGNNRMPVEQIDLILEKKDRQLAGPTAAPNGLYLKEIRYEE</sequence>
<keyword id="KW-0413">Isomerase</keyword>
<keyword id="KW-0819">tRNA processing</keyword>
<dbReference type="EC" id="5.4.99.12" evidence="1"/>
<dbReference type="EMBL" id="CP001033">
    <property type="protein sequence ID" value="ACB90830.1"/>
    <property type="molecule type" value="Genomic_DNA"/>
</dbReference>
<dbReference type="RefSeq" id="WP_000199207.1">
    <property type="nucleotide sequence ID" value="NC_010582.1"/>
</dbReference>
<dbReference type="SMR" id="B2IRB1"/>
<dbReference type="KEGG" id="spw:SPCG_1578"/>
<dbReference type="HOGENOM" id="CLU_014673_0_1_9"/>
<dbReference type="GO" id="GO:0003723">
    <property type="term" value="F:RNA binding"/>
    <property type="evidence" value="ECO:0007669"/>
    <property type="project" value="InterPro"/>
</dbReference>
<dbReference type="GO" id="GO:0160147">
    <property type="term" value="F:tRNA pseudouridine(38-40) synthase activity"/>
    <property type="evidence" value="ECO:0007669"/>
    <property type="project" value="UniProtKB-EC"/>
</dbReference>
<dbReference type="GO" id="GO:0031119">
    <property type="term" value="P:tRNA pseudouridine synthesis"/>
    <property type="evidence" value="ECO:0007669"/>
    <property type="project" value="UniProtKB-UniRule"/>
</dbReference>
<dbReference type="CDD" id="cd02570">
    <property type="entry name" value="PseudoU_synth_EcTruA"/>
    <property type="match status" value="1"/>
</dbReference>
<dbReference type="FunFam" id="3.30.70.580:FF:000001">
    <property type="entry name" value="tRNA pseudouridine synthase A"/>
    <property type="match status" value="1"/>
</dbReference>
<dbReference type="FunFam" id="3.30.70.660:FF:000009">
    <property type="entry name" value="tRNA pseudouridine synthase A"/>
    <property type="match status" value="1"/>
</dbReference>
<dbReference type="Gene3D" id="3.30.70.660">
    <property type="entry name" value="Pseudouridine synthase I, catalytic domain, C-terminal subdomain"/>
    <property type="match status" value="1"/>
</dbReference>
<dbReference type="Gene3D" id="3.30.70.580">
    <property type="entry name" value="Pseudouridine synthase I, catalytic domain, N-terminal subdomain"/>
    <property type="match status" value="1"/>
</dbReference>
<dbReference type="HAMAP" id="MF_00171">
    <property type="entry name" value="TruA"/>
    <property type="match status" value="1"/>
</dbReference>
<dbReference type="InterPro" id="IPR020103">
    <property type="entry name" value="PsdUridine_synth_cat_dom_sf"/>
</dbReference>
<dbReference type="InterPro" id="IPR001406">
    <property type="entry name" value="PsdUridine_synth_TruA"/>
</dbReference>
<dbReference type="InterPro" id="IPR020097">
    <property type="entry name" value="PsdUridine_synth_TruA_a/b_dom"/>
</dbReference>
<dbReference type="InterPro" id="IPR020095">
    <property type="entry name" value="PsdUridine_synth_TruA_C"/>
</dbReference>
<dbReference type="InterPro" id="IPR020094">
    <property type="entry name" value="TruA/RsuA/RluB/E/F_N"/>
</dbReference>
<dbReference type="NCBIfam" id="TIGR00071">
    <property type="entry name" value="hisT_truA"/>
    <property type="match status" value="1"/>
</dbReference>
<dbReference type="PANTHER" id="PTHR11142">
    <property type="entry name" value="PSEUDOURIDYLATE SYNTHASE"/>
    <property type="match status" value="1"/>
</dbReference>
<dbReference type="PANTHER" id="PTHR11142:SF0">
    <property type="entry name" value="TRNA PSEUDOURIDINE SYNTHASE-LIKE 1"/>
    <property type="match status" value="1"/>
</dbReference>
<dbReference type="Pfam" id="PF01416">
    <property type="entry name" value="PseudoU_synth_1"/>
    <property type="match status" value="2"/>
</dbReference>
<dbReference type="PIRSF" id="PIRSF001430">
    <property type="entry name" value="tRNA_psdUrid_synth"/>
    <property type="match status" value="1"/>
</dbReference>
<dbReference type="SUPFAM" id="SSF55120">
    <property type="entry name" value="Pseudouridine synthase"/>
    <property type="match status" value="1"/>
</dbReference>
<protein>
    <recommendedName>
        <fullName evidence="1">tRNA pseudouridine synthase A</fullName>
        <ecNumber evidence="1">5.4.99.12</ecNumber>
    </recommendedName>
    <alternativeName>
        <fullName evidence="1">tRNA pseudouridine(38-40) synthase</fullName>
    </alternativeName>
    <alternativeName>
        <fullName evidence="1">tRNA pseudouridylate synthase I</fullName>
    </alternativeName>
    <alternativeName>
        <fullName evidence="1">tRNA-uridine isomerase I</fullName>
    </alternativeName>
</protein>
<evidence type="ECO:0000255" key="1">
    <source>
        <dbReference type="HAMAP-Rule" id="MF_00171"/>
    </source>
</evidence>
<feature type="chain" id="PRO_1000097793" description="tRNA pseudouridine synthase A">
    <location>
        <begin position="1"/>
        <end position="249"/>
    </location>
</feature>
<feature type="active site" description="Nucleophile" evidence="1">
    <location>
        <position position="53"/>
    </location>
</feature>
<feature type="binding site" evidence="1">
    <location>
        <position position="111"/>
    </location>
    <ligand>
        <name>substrate</name>
    </ligand>
</feature>
<organism>
    <name type="scientific">Streptococcus pneumoniae (strain CGSP14)</name>
    <dbReference type="NCBI Taxonomy" id="516950"/>
    <lineage>
        <taxon>Bacteria</taxon>
        <taxon>Bacillati</taxon>
        <taxon>Bacillota</taxon>
        <taxon>Bacilli</taxon>
        <taxon>Lactobacillales</taxon>
        <taxon>Streptococcaceae</taxon>
        <taxon>Streptococcus</taxon>
    </lineage>
</organism>
<name>TRUA_STRPS</name>
<proteinExistence type="inferred from homology"/>
<reference key="1">
    <citation type="journal article" date="2009" name="BMC Genomics">
        <title>Genome evolution driven by host adaptations results in a more virulent and antimicrobial-resistant Streptococcus pneumoniae serotype 14.</title>
        <authorList>
            <person name="Ding F."/>
            <person name="Tang P."/>
            <person name="Hsu M.-H."/>
            <person name="Cui P."/>
            <person name="Hu S."/>
            <person name="Yu J."/>
            <person name="Chiu C.-H."/>
        </authorList>
    </citation>
    <scope>NUCLEOTIDE SEQUENCE [LARGE SCALE GENOMIC DNA]</scope>
    <source>
        <strain>CGSP14</strain>
    </source>
</reference>
<comment type="function">
    <text evidence="1">Formation of pseudouridine at positions 38, 39 and 40 in the anticodon stem and loop of transfer RNAs.</text>
</comment>
<comment type="catalytic activity">
    <reaction evidence="1">
        <text>uridine(38/39/40) in tRNA = pseudouridine(38/39/40) in tRNA</text>
        <dbReference type="Rhea" id="RHEA:22376"/>
        <dbReference type="Rhea" id="RHEA-COMP:10085"/>
        <dbReference type="Rhea" id="RHEA-COMP:10087"/>
        <dbReference type="ChEBI" id="CHEBI:65314"/>
        <dbReference type="ChEBI" id="CHEBI:65315"/>
        <dbReference type="EC" id="5.4.99.12"/>
    </reaction>
</comment>
<comment type="subunit">
    <text evidence="1">Homodimer.</text>
</comment>
<comment type="similarity">
    <text evidence="1">Belongs to the tRNA pseudouridine synthase TruA family.</text>
</comment>